<name>HBA_SAGMY</name>
<evidence type="ECO:0000250" key="1">
    <source>
        <dbReference type="UniProtKB" id="P01942"/>
    </source>
</evidence>
<evidence type="ECO:0000250" key="2">
    <source>
        <dbReference type="UniProtKB" id="P01946"/>
    </source>
</evidence>
<evidence type="ECO:0000250" key="3">
    <source>
        <dbReference type="UniProtKB" id="P69905"/>
    </source>
</evidence>
<evidence type="ECO:0000255" key="4">
    <source>
        <dbReference type="PROSITE-ProRule" id="PRU00238"/>
    </source>
</evidence>
<accession>Q7M3B6</accession>
<organism>
    <name type="scientific">Saguinus mystax</name>
    <name type="common">Moustached tamarin</name>
    <dbReference type="NCBI Taxonomy" id="9488"/>
    <lineage>
        <taxon>Eukaryota</taxon>
        <taxon>Metazoa</taxon>
        <taxon>Chordata</taxon>
        <taxon>Craniata</taxon>
        <taxon>Vertebrata</taxon>
        <taxon>Euteleostomi</taxon>
        <taxon>Mammalia</taxon>
        <taxon>Eutheria</taxon>
        <taxon>Euarchontoglires</taxon>
        <taxon>Primates</taxon>
        <taxon>Haplorrhini</taxon>
        <taxon>Platyrrhini</taxon>
        <taxon>Cebidae</taxon>
        <taxon>Callitrichinae</taxon>
        <taxon>Saguinus</taxon>
    </lineage>
</organism>
<reference key="1">
    <citation type="journal article" date="1992" name="Fu Dan Xue Bao Zi Ran Ke Xue Ban">
        <title>The primary structure of hemoglobin alpha chain of marmoset (Saguinus mystax).</title>
        <authorList>
            <person name="Yang L.C."/>
            <person name="Jin L."/>
            <person name="Chai C.X."/>
            <person name="Liu Z.D."/>
            <person name="Yu J.H."/>
        </authorList>
    </citation>
    <scope>PROTEIN SEQUENCE</scope>
</reference>
<dbReference type="PIR" id="JC1099">
    <property type="entry name" value="JC1099"/>
</dbReference>
<dbReference type="SMR" id="Q7M3B6"/>
<dbReference type="GO" id="GO:0072562">
    <property type="term" value="C:blood microparticle"/>
    <property type="evidence" value="ECO:0007669"/>
    <property type="project" value="TreeGrafter"/>
</dbReference>
<dbReference type="GO" id="GO:0031838">
    <property type="term" value="C:haptoglobin-hemoglobin complex"/>
    <property type="evidence" value="ECO:0007669"/>
    <property type="project" value="TreeGrafter"/>
</dbReference>
<dbReference type="GO" id="GO:0005833">
    <property type="term" value="C:hemoglobin complex"/>
    <property type="evidence" value="ECO:0007669"/>
    <property type="project" value="InterPro"/>
</dbReference>
<dbReference type="GO" id="GO:0031720">
    <property type="term" value="F:haptoglobin binding"/>
    <property type="evidence" value="ECO:0007669"/>
    <property type="project" value="TreeGrafter"/>
</dbReference>
<dbReference type="GO" id="GO:0020037">
    <property type="term" value="F:heme binding"/>
    <property type="evidence" value="ECO:0007669"/>
    <property type="project" value="InterPro"/>
</dbReference>
<dbReference type="GO" id="GO:0005506">
    <property type="term" value="F:iron ion binding"/>
    <property type="evidence" value="ECO:0007669"/>
    <property type="project" value="InterPro"/>
</dbReference>
<dbReference type="GO" id="GO:0043177">
    <property type="term" value="F:organic acid binding"/>
    <property type="evidence" value="ECO:0007669"/>
    <property type="project" value="TreeGrafter"/>
</dbReference>
<dbReference type="GO" id="GO:0019825">
    <property type="term" value="F:oxygen binding"/>
    <property type="evidence" value="ECO:0007669"/>
    <property type="project" value="InterPro"/>
</dbReference>
<dbReference type="GO" id="GO:0005344">
    <property type="term" value="F:oxygen carrier activity"/>
    <property type="evidence" value="ECO:0007669"/>
    <property type="project" value="UniProtKB-KW"/>
</dbReference>
<dbReference type="GO" id="GO:0004601">
    <property type="term" value="F:peroxidase activity"/>
    <property type="evidence" value="ECO:0007669"/>
    <property type="project" value="TreeGrafter"/>
</dbReference>
<dbReference type="GO" id="GO:0042744">
    <property type="term" value="P:hydrogen peroxide catabolic process"/>
    <property type="evidence" value="ECO:0007669"/>
    <property type="project" value="TreeGrafter"/>
</dbReference>
<dbReference type="CDD" id="cd08927">
    <property type="entry name" value="Hb-alpha-like"/>
    <property type="match status" value="1"/>
</dbReference>
<dbReference type="FunFam" id="1.10.490.10:FF:000002">
    <property type="entry name" value="Hemoglobin subunit alpha"/>
    <property type="match status" value="1"/>
</dbReference>
<dbReference type="Gene3D" id="1.10.490.10">
    <property type="entry name" value="Globins"/>
    <property type="match status" value="1"/>
</dbReference>
<dbReference type="InterPro" id="IPR000971">
    <property type="entry name" value="Globin"/>
</dbReference>
<dbReference type="InterPro" id="IPR009050">
    <property type="entry name" value="Globin-like_sf"/>
</dbReference>
<dbReference type="InterPro" id="IPR012292">
    <property type="entry name" value="Globin/Proto"/>
</dbReference>
<dbReference type="InterPro" id="IPR002338">
    <property type="entry name" value="Hemoglobin_a-typ"/>
</dbReference>
<dbReference type="InterPro" id="IPR050056">
    <property type="entry name" value="Hemoglobin_oxygen_transport"/>
</dbReference>
<dbReference type="InterPro" id="IPR002339">
    <property type="entry name" value="Hemoglobin_pi"/>
</dbReference>
<dbReference type="PANTHER" id="PTHR11442">
    <property type="entry name" value="HEMOGLOBIN FAMILY MEMBER"/>
    <property type="match status" value="1"/>
</dbReference>
<dbReference type="PANTHER" id="PTHR11442:SF48">
    <property type="entry name" value="HEMOGLOBIN SUBUNIT ALPHA"/>
    <property type="match status" value="1"/>
</dbReference>
<dbReference type="Pfam" id="PF00042">
    <property type="entry name" value="Globin"/>
    <property type="match status" value="1"/>
</dbReference>
<dbReference type="PRINTS" id="PR00612">
    <property type="entry name" value="ALPHAHAEM"/>
</dbReference>
<dbReference type="PRINTS" id="PR00815">
    <property type="entry name" value="PIHAEM"/>
</dbReference>
<dbReference type="SUPFAM" id="SSF46458">
    <property type="entry name" value="Globin-like"/>
    <property type="match status" value="1"/>
</dbReference>
<dbReference type="PROSITE" id="PS01033">
    <property type="entry name" value="GLOBIN"/>
    <property type="match status" value="1"/>
</dbReference>
<protein>
    <recommendedName>
        <fullName>Hemoglobin subunit alpha</fullName>
    </recommendedName>
    <alternativeName>
        <fullName>Alpha-globin</fullName>
    </alternativeName>
    <alternativeName>
        <fullName>Hemoglobin alpha chain</fullName>
    </alternativeName>
    <component>
        <recommendedName>
            <fullName evidence="2">Hemopressin</fullName>
        </recommendedName>
    </component>
</protein>
<proteinExistence type="evidence at protein level"/>
<comment type="function">
    <text>Involved in oxygen transport from the lung to the various peripheral tissues.</text>
</comment>
<comment type="function">
    <molecule>Hemopressin</molecule>
    <text evidence="2">Hemopressin acts as an antagonist peptide of the cannabinoid receptor CNR1. Hemopressin-binding efficiently blocks cannabinoid receptor CNR1 and subsequent signaling.</text>
</comment>
<comment type="subunit">
    <text>Heterotetramer of two alpha chains and two beta chains.</text>
</comment>
<comment type="tissue specificity">
    <text>Red blood cells.</text>
</comment>
<comment type="similarity">
    <text evidence="4">Belongs to the globin family.</text>
</comment>
<feature type="chain" id="PRO_0000052756" description="Hemoglobin subunit alpha">
    <location>
        <begin position="1"/>
        <end position="141"/>
    </location>
</feature>
<feature type="peptide" id="PRO_0000455942" description="Hemopressin" evidence="2">
    <location>
        <begin position="95"/>
        <end position="103"/>
    </location>
</feature>
<feature type="domain" description="Globin" evidence="4">
    <location>
        <begin position="1"/>
        <end position="141"/>
    </location>
</feature>
<feature type="binding site" evidence="4">
    <location>
        <position position="58"/>
    </location>
    <ligand>
        <name>O2</name>
        <dbReference type="ChEBI" id="CHEBI:15379"/>
    </ligand>
</feature>
<feature type="binding site" description="proximal binding residue" evidence="4">
    <location>
        <position position="87"/>
    </location>
    <ligand>
        <name>heme b</name>
        <dbReference type="ChEBI" id="CHEBI:60344"/>
    </ligand>
    <ligandPart>
        <name>Fe</name>
        <dbReference type="ChEBI" id="CHEBI:18248"/>
    </ligandPart>
</feature>
<feature type="modified residue" description="Phosphoserine" evidence="3">
    <location>
        <position position="3"/>
    </location>
</feature>
<feature type="modified residue" description="N6-succinyllysine" evidence="1">
    <location>
        <position position="7"/>
    </location>
</feature>
<feature type="modified residue" description="N6-succinyllysine" evidence="1">
    <location>
        <position position="11"/>
    </location>
</feature>
<feature type="modified residue" description="N6-acetyllysine; alternate" evidence="3">
    <location>
        <position position="16"/>
    </location>
</feature>
<feature type="modified residue" description="N6-succinyllysine; alternate" evidence="1">
    <location>
        <position position="16"/>
    </location>
</feature>
<feature type="modified residue" description="Phosphotyrosine" evidence="3">
    <location>
        <position position="24"/>
    </location>
</feature>
<feature type="modified residue" description="Phosphoserine" evidence="3">
    <location>
        <position position="35"/>
    </location>
</feature>
<feature type="modified residue" description="N6-succinyllysine" evidence="1">
    <location>
        <position position="40"/>
    </location>
</feature>
<feature type="modified residue" description="Phosphoserine" evidence="3">
    <location>
        <position position="49"/>
    </location>
</feature>
<feature type="modified residue" description="Phosphoserine" evidence="1">
    <location>
        <position position="102"/>
    </location>
</feature>
<feature type="modified residue" description="Phosphothreonine" evidence="1">
    <location>
        <position position="108"/>
    </location>
</feature>
<feature type="modified residue" description="Phosphoserine" evidence="1">
    <location>
        <position position="124"/>
    </location>
</feature>
<feature type="modified residue" description="Phosphoserine" evidence="1">
    <location>
        <position position="131"/>
    </location>
</feature>
<feature type="modified residue" description="Phosphothreonine" evidence="1">
    <location>
        <position position="134"/>
    </location>
</feature>
<feature type="modified residue" description="Phosphothreonine" evidence="1">
    <location>
        <position position="137"/>
    </location>
</feature>
<feature type="modified residue" description="Phosphoserine" evidence="1">
    <location>
        <position position="138"/>
    </location>
</feature>
<gene>
    <name type="primary">HBA</name>
</gene>
<keyword id="KW-0007">Acetylation</keyword>
<keyword id="KW-0903">Direct protein sequencing</keyword>
<keyword id="KW-0349">Heme</keyword>
<keyword id="KW-0408">Iron</keyword>
<keyword id="KW-0479">Metal-binding</keyword>
<keyword id="KW-0561">Oxygen transport</keyword>
<keyword id="KW-0597">Phosphoprotein</keyword>
<keyword id="KW-0813">Transport</keyword>
<sequence length="141" mass="15070">VLSPADKSNVKAAWGKVGGHAGDYGAEALERMFLSFPTTKTYFPHFDLSHGSAQVKGHGKKVADALTNAVALVDDMPNALSALSDLHAHKLRVDPVNFKLLSHCLLVTLAAHHPADFTPAVHASLDKFLASVSTVLTSKYR</sequence>